<proteinExistence type="evidence at transcript level"/>
<evidence type="ECO:0000250" key="1">
    <source>
        <dbReference type="UniProtKB" id="P68363"/>
    </source>
</evidence>
<evidence type="ECO:0000250" key="2">
    <source>
        <dbReference type="UniProtKB" id="Q13509"/>
    </source>
</evidence>
<evidence type="ECO:0000256" key="3">
    <source>
        <dbReference type="SAM" id="MobiDB-lite"/>
    </source>
</evidence>
<evidence type="ECO:0000305" key="4"/>
<keyword id="KW-0963">Cytoplasm</keyword>
<keyword id="KW-0206">Cytoskeleton</keyword>
<keyword id="KW-0342">GTP-binding</keyword>
<keyword id="KW-0460">Magnesium</keyword>
<keyword id="KW-0479">Metal-binding</keyword>
<keyword id="KW-0493">Microtubule</keyword>
<keyword id="KW-0547">Nucleotide-binding</keyword>
<feature type="chain" id="PRO_0000048282" description="Tubulin beta-1 chain">
    <location>
        <begin position="1"/>
        <end position="447"/>
    </location>
</feature>
<feature type="region of interest" description="Disordered" evidence="3">
    <location>
        <begin position="428"/>
        <end position="447"/>
    </location>
</feature>
<feature type="compositionally biased region" description="Acidic residues" evidence="3">
    <location>
        <begin position="429"/>
        <end position="447"/>
    </location>
</feature>
<feature type="binding site" evidence="2">
    <location>
        <position position="11"/>
    </location>
    <ligand>
        <name>GTP</name>
        <dbReference type="ChEBI" id="CHEBI:37565"/>
    </ligand>
</feature>
<feature type="binding site" evidence="1">
    <location>
        <position position="69"/>
    </location>
    <ligand>
        <name>GTP</name>
        <dbReference type="ChEBI" id="CHEBI:37565"/>
    </ligand>
</feature>
<feature type="binding site" evidence="1">
    <location>
        <position position="69"/>
    </location>
    <ligand>
        <name>Mg(2+)</name>
        <dbReference type="ChEBI" id="CHEBI:18420"/>
    </ligand>
</feature>
<feature type="binding site" evidence="2">
    <location>
        <position position="138"/>
    </location>
    <ligand>
        <name>GTP</name>
        <dbReference type="ChEBI" id="CHEBI:37565"/>
    </ligand>
</feature>
<feature type="binding site" evidence="2">
    <location>
        <position position="142"/>
    </location>
    <ligand>
        <name>GTP</name>
        <dbReference type="ChEBI" id="CHEBI:37565"/>
    </ligand>
</feature>
<feature type="binding site" evidence="2">
    <location>
        <position position="143"/>
    </location>
    <ligand>
        <name>GTP</name>
        <dbReference type="ChEBI" id="CHEBI:37565"/>
    </ligand>
</feature>
<feature type="binding site" evidence="2">
    <location>
        <position position="144"/>
    </location>
    <ligand>
        <name>GTP</name>
        <dbReference type="ChEBI" id="CHEBI:37565"/>
    </ligand>
</feature>
<feature type="binding site" evidence="2">
    <location>
        <position position="204"/>
    </location>
    <ligand>
        <name>GTP</name>
        <dbReference type="ChEBI" id="CHEBI:37565"/>
    </ligand>
</feature>
<feature type="binding site" evidence="2">
    <location>
        <position position="226"/>
    </location>
    <ligand>
        <name>GTP</name>
        <dbReference type="ChEBI" id="CHEBI:37565"/>
    </ligand>
</feature>
<accession>O17449</accession>
<comment type="function">
    <text>Tubulin is the major constituent of microtubules, a cylinder consisting of laterally associated linear protofilaments composed of alpha- and beta-tubulin heterodimers. Microtubules grow by the addition of GTP-tubulin dimers to the microtubule end, where a stabilizing cap forms. Below the cap, tubulin dimers are in GDP-bound state, owing to GTPase activity of alpha-tubulin.</text>
</comment>
<comment type="cofactor">
    <cofactor evidence="1">
        <name>Mg(2+)</name>
        <dbReference type="ChEBI" id="CHEBI:18420"/>
    </cofactor>
</comment>
<comment type="subunit">
    <text>Dimer of alpha and beta chains. A typical microtubule is a hollow water-filled tube with an outer diameter of 25 nm and an inner diameter of 15 nM. Alpha-beta heterodimers associate head-to-tail to form protofilaments running lengthwise along the microtubule wall with the beta-tubulin subunit facing the microtubule plus end conferring a structural polarity. Microtubules usually have 13 protofilaments but different protofilament numbers can be found in some organisms and specialized cells.</text>
</comment>
<comment type="subcellular location">
    <subcellularLocation>
        <location>Cytoplasm</location>
        <location>Cytoskeleton</location>
    </subcellularLocation>
</comment>
<comment type="similarity">
    <text evidence="4">Belongs to the tubulin family.</text>
</comment>
<sequence length="447" mass="50230">MREIVHIQAGQCGNQIGAKFWEIISDEHGIDPTGAYHGDSDLQLERINVYYNEASGGKYVPRAILVDLEPGTMDSVRSGPFGQIFRPDNFVFGQSGAGNNWAKGHYTEGAELVDSVLDVVRKEAESCDCLQGFQLTHSLGGGTGSGMGTLLISKIREEYPDRIMNTYSVVPSPKVSDTVVEPYNATLSVHQLVENTDETYCIDNEALYDICFRTLKLSTPTYGDLNHLVSLTMSGVTTCLRFPGQLNADLRKLAVNMVPFPRLHFFMPGFAPLTSRGSQQYRALTVPELTQQMFDAKNMMAACDPRHGRYLTVAAIFRGRMSMKEVDEQMLNIQNKNSSYFVEWIPNNVKTAVCDIPPRGLKMSATFIGNSTAIQELFKRISEQFTAMFRRKAFLHWYTGEGMDEMEFTEAESNMNDLVSEYQQYQEATADEDAEFDEEQEQEIEDN</sequence>
<dbReference type="EMBL" id="AF030547">
    <property type="protein sequence ID" value="AAB84297.1"/>
    <property type="molecule type" value="mRNA"/>
</dbReference>
<dbReference type="SMR" id="O17449"/>
<dbReference type="OrthoDB" id="1662883at2759"/>
<dbReference type="GO" id="GO:0005737">
    <property type="term" value="C:cytoplasm"/>
    <property type="evidence" value="ECO:0007669"/>
    <property type="project" value="UniProtKB-KW"/>
</dbReference>
<dbReference type="GO" id="GO:0005874">
    <property type="term" value="C:microtubule"/>
    <property type="evidence" value="ECO:0007669"/>
    <property type="project" value="UniProtKB-KW"/>
</dbReference>
<dbReference type="GO" id="GO:0005525">
    <property type="term" value="F:GTP binding"/>
    <property type="evidence" value="ECO:0007669"/>
    <property type="project" value="UniProtKB-KW"/>
</dbReference>
<dbReference type="GO" id="GO:0003924">
    <property type="term" value="F:GTPase activity"/>
    <property type="evidence" value="ECO:0007669"/>
    <property type="project" value="InterPro"/>
</dbReference>
<dbReference type="GO" id="GO:0046872">
    <property type="term" value="F:metal ion binding"/>
    <property type="evidence" value="ECO:0007669"/>
    <property type="project" value="UniProtKB-KW"/>
</dbReference>
<dbReference type="GO" id="GO:0005200">
    <property type="term" value="F:structural constituent of cytoskeleton"/>
    <property type="evidence" value="ECO:0007669"/>
    <property type="project" value="InterPro"/>
</dbReference>
<dbReference type="GO" id="GO:0007017">
    <property type="term" value="P:microtubule-based process"/>
    <property type="evidence" value="ECO:0007669"/>
    <property type="project" value="InterPro"/>
</dbReference>
<dbReference type="CDD" id="cd02187">
    <property type="entry name" value="beta_tubulin"/>
    <property type="match status" value="1"/>
</dbReference>
<dbReference type="FunFam" id="1.10.287.600:FF:000006">
    <property type="entry name" value="Tubulin beta chain"/>
    <property type="match status" value="1"/>
</dbReference>
<dbReference type="FunFam" id="3.30.1330.20:FF:000002">
    <property type="entry name" value="Tubulin beta chain"/>
    <property type="match status" value="1"/>
</dbReference>
<dbReference type="FunFam" id="3.40.50.1440:FF:000003">
    <property type="entry name" value="Tubulin beta chain"/>
    <property type="match status" value="1"/>
</dbReference>
<dbReference type="Gene3D" id="1.10.287.600">
    <property type="entry name" value="Helix hairpin bin"/>
    <property type="match status" value="1"/>
</dbReference>
<dbReference type="Gene3D" id="3.30.1330.20">
    <property type="entry name" value="Tubulin/FtsZ, C-terminal domain"/>
    <property type="match status" value="1"/>
</dbReference>
<dbReference type="Gene3D" id="3.40.50.1440">
    <property type="entry name" value="Tubulin/FtsZ, GTPase domain"/>
    <property type="match status" value="1"/>
</dbReference>
<dbReference type="InterPro" id="IPR013838">
    <property type="entry name" value="Beta-tubulin_BS"/>
</dbReference>
<dbReference type="InterPro" id="IPR002453">
    <property type="entry name" value="Beta_tubulin"/>
</dbReference>
<dbReference type="InterPro" id="IPR008280">
    <property type="entry name" value="Tub_FtsZ_C"/>
</dbReference>
<dbReference type="InterPro" id="IPR000217">
    <property type="entry name" value="Tubulin"/>
</dbReference>
<dbReference type="InterPro" id="IPR037103">
    <property type="entry name" value="Tubulin/FtsZ-like_C"/>
</dbReference>
<dbReference type="InterPro" id="IPR018316">
    <property type="entry name" value="Tubulin/FtsZ_2-layer-sand-dom"/>
</dbReference>
<dbReference type="InterPro" id="IPR036525">
    <property type="entry name" value="Tubulin/FtsZ_GTPase_sf"/>
</dbReference>
<dbReference type="InterPro" id="IPR023123">
    <property type="entry name" value="Tubulin_C"/>
</dbReference>
<dbReference type="InterPro" id="IPR017975">
    <property type="entry name" value="Tubulin_CS"/>
</dbReference>
<dbReference type="InterPro" id="IPR003008">
    <property type="entry name" value="Tubulin_FtsZ_GTPase"/>
</dbReference>
<dbReference type="PANTHER" id="PTHR11588">
    <property type="entry name" value="TUBULIN"/>
    <property type="match status" value="1"/>
</dbReference>
<dbReference type="Pfam" id="PF00091">
    <property type="entry name" value="Tubulin"/>
    <property type="match status" value="1"/>
</dbReference>
<dbReference type="Pfam" id="PF03953">
    <property type="entry name" value="Tubulin_C"/>
    <property type="match status" value="1"/>
</dbReference>
<dbReference type="PRINTS" id="PR01163">
    <property type="entry name" value="BETATUBULIN"/>
</dbReference>
<dbReference type="PRINTS" id="PR01161">
    <property type="entry name" value="TUBULIN"/>
</dbReference>
<dbReference type="SMART" id="SM00864">
    <property type="entry name" value="Tubulin"/>
    <property type="match status" value="1"/>
</dbReference>
<dbReference type="SMART" id="SM00865">
    <property type="entry name" value="Tubulin_C"/>
    <property type="match status" value="1"/>
</dbReference>
<dbReference type="SUPFAM" id="SSF55307">
    <property type="entry name" value="Tubulin C-terminal domain-like"/>
    <property type="match status" value="1"/>
</dbReference>
<dbReference type="SUPFAM" id="SSF52490">
    <property type="entry name" value="Tubulin nucleotide-binding domain-like"/>
    <property type="match status" value="1"/>
</dbReference>
<dbReference type="PROSITE" id="PS00227">
    <property type="entry name" value="TUBULIN"/>
    <property type="match status" value="1"/>
</dbReference>
<dbReference type="PROSITE" id="PS00228">
    <property type="entry name" value="TUBULIN_B_AUTOREG"/>
    <property type="match status" value="1"/>
</dbReference>
<name>TBB1_MANSE</name>
<protein>
    <recommendedName>
        <fullName>Tubulin beta-1 chain</fullName>
    </recommendedName>
    <alternativeName>
        <fullName>Beta-1-tubulin</fullName>
    </alternativeName>
</protein>
<organism>
    <name type="scientific">Manduca sexta</name>
    <name type="common">Tobacco hawkmoth</name>
    <name type="synonym">Tobacco hornworm</name>
    <dbReference type="NCBI Taxonomy" id="7130"/>
    <lineage>
        <taxon>Eukaryota</taxon>
        <taxon>Metazoa</taxon>
        <taxon>Ecdysozoa</taxon>
        <taxon>Arthropoda</taxon>
        <taxon>Hexapoda</taxon>
        <taxon>Insecta</taxon>
        <taxon>Pterygota</taxon>
        <taxon>Neoptera</taxon>
        <taxon>Endopterygota</taxon>
        <taxon>Lepidoptera</taxon>
        <taxon>Glossata</taxon>
        <taxon>Ditrysia</taxon>
        <taxon>Bombycoidea</taxon>
        <taxon>Sphingidae</taxon>
        <taxon>Sphinginae</taxon>
        <taxon>Sphingini</taxon>
        <taxon>Manduca</taxon>
    </lineage>
</organism>
<reference key="1">
    <citation type="journal article" date="1998" name="Mol. Cell. Endocrinol.">
        <title>Cloning of a beta1 tubulin cDNA from an insect endocrine gland: developmental and hormone-induced changes in mRNA expression.</title>
        <authorList>
            <person name="Rybczynski R."/>
            <person name="Gilbert L.I."/>
        </authorList>
    </citation>
    <scope>NUCLEOTIDE SEQUENCE [MRNA]</scope>
    <source>
        <tissue>Prothoracic gland</tissue>
    </source>
</reference>